<sequence>MTILKNIPKVDKVLGWEGLKSLLAAYPRPVVITAVRSSLEALRAEALRGETCAEAFAEKGVVGRIARELATVNALKLKRLVNGTGVVIHTNLGRSPLPESVRQALNEVAFGYSNLEFDLALGERGSRYSHVEGIICELTGAEAALVVNNNAAAVLLALSSLAAGKEVIVSRGELVEIGGSFRIPDVMRQSGAVLKEVGATNRTHPRDYSGAITPETALLLKVHCSNFAVVGFTAEVSAAELVELGRGHSLPVMADVGSGNLVELSGLLGCNEPTVQEFVRAGVDVITFSGDKLLGGPQAGIIVGKSSLLAPMKNHPLLRAVRIDKLTLAALEGTLRLYRDERRALKEIPTLRMLTASAADLSRTAKALLRRLQRAIPATVKLSLSAGFSQVGGGALPLLELPTTLIAVTADGMSAQDIETTLRGCPVPVIGRIFKGTFLLDPRTILNDDVPALIAALQTLAR</sequence>
<keyword id="KW-0963">Cytoplasm</keyword>
<keyword id="KW-0648">Protein biosynthesis</keyword>
<keyword id="KW-0663">Pyridoxal phosphate</keyword>
<keyword id="KW-1185">Reference proteome</keyword>
<keyword id="KW-0711">Selenium</keyword>
<keyword id="KW-0808">Transferase</keyword>
<protein>
    <recommendedName>
        <fullName evidence="1">L-seryl-tRNA(Sec) selenium transferase</fullName>
        <ecNumber evidence="1">2.9.1.1</ecNumber>
    </recommendedName>
    <alternativeName>
        <fullName evidence="1">Selenocysteine synthase</fullName>
        <shortName evidence="1">Sec synthase</shortName>
    </alternativeName>
    <alternativeName>
        <fullName evidence="1">Selenocysteinyl-tRNA(Sec) synthase</fullName>
    </alternativeName>
</protein>
<proteinExistence type="inferred from homology"/>
<comment type="function">
    <text evidence="1">Converts seryl-tRNA(Sec) to selenocysteinyl-tRNA(Sec) required for selenoprotein biosynthesis.</text>
</comment>
<comment type="catalytic activity">
    <reaction evidence="1">
        <text>L-seryl-tRNA(Sec) + selenophosphate + H(+) = L-selenocysteinyl-tRNA(Sec) + phosphate</text>
        <dbReference type="Rhea" id="RHEA:22728"/>
        <dbReference type="Rhea" id="RHEA-COMP:9742"/>
        <dbReference type="Rhea" id="RHEA-COMP:9743"/>
        <dbReference type="ChEBI" id="CHEBI:15378"/>
        <dbReference type="ChEBI" id="CHEBI:16144"/>
        <dbReference type="ChEBI" id="CHEBI:43474"/>
        <dbReference type="ChEBI" id="CHEBI:78533"/>
        <dbReference type="ChEBI" id="CHEBI:78573"/>
        <dbReference type="EC" id="2.9.1.1"/>
    </reaction>
</comment>
<comment type="cofactor">
    <cofactor evidence="1">
        <name>pyridoxal 5'-phosphate</name>
        <dbReference type="ChEBI" id="CHEBI:597326"/>
    </cofactor>
</comment>
<comment type="pathway">
    <text evidence="1">Aminoacyl-tRNA biosynthesis; selenocysteinyl-tRNA(Sec) biosynthesis; selenocysteinyl-tRNA(Sec) from L-seryl-tRNA(Sec) (bacterial route): step 1/1.</text>
</comment>
<comment type="subcellular location">
    <subcellularLocation>
        <location evidence="1">Cytoplasm</location>
    </subcellularLocation>
</comment>
<comment type="similarity">
    <text evidence="1">Belongs to the SelA family.</text>
</comment>
<evidence type="ECO:0000255" key="1">
    <source>
        <dbReference type="HAMAP-Rule" id="MF_00423"/>
    </source>
</evidence>
<organism>
    <name type="scientific">Geotalea uraniireducens (strain Rf4)</name>
    <name type="common">Geobacter uraniireducens</name>
    <dbReference type="NCBI Taxonomy" id="351605"/>
    <lineage>
        <taxon>Bacteria</taxon>
        <taxon>Pseudomonadati</taxon>
        <taxon>Thermodesulfobacteriota</taxon>
        <taxon>Desulfuromonadia</taxon>
        <taxon>Geobacterales</taxon>
        <taxon>Geobacteraceae</taxon>
        <taxon>Geotalea</taxon>
    </lineage>
</organism>
<name>SELA_GEOUR</name>
<feature type="chain" id="PRO_1000080560" description="L-seryl-tRNA(Sec) selenium transferase">
    <location>
        <begin position="1"/>
        <end position="462"/>
    </location>
</feature>
<feature type="modified residue" description="N6-(pyridoxal phosphate)lysine" evidence="1">
    <location>
        <position position="292"/>
    </location>
</feature>
<accession>A5G937</accession>
<reference key="1">
    <citation type="submission" date="2007-05" db="EMBL/GenBank/DDBJ databases">
        <title>Complete sequence of Geobacter uraniireducens Rf4.</title>
        <authorList>
            <consortium name="US DOE Joint Genome Institute"/>
            <person name="Copeland A."/>
            <person name="Lucas S."/>
            <person name="Lapidus A."/>
            <person name="Barry K."/>
            <person name="Detter J.C."/>
            <person name="Glavina del Rio T."/>
            <person name="Hammon N."/>
            <person name="Israni S."/>
            <person name="Dalin E."/>
            <person name="Tice H."/>
            <person name="Pitluck S."/>
            <person name="Chertkov O."/>
            <person name="Brettin T."/>
            <person name="Bruce D."/>
            <person name="Han C."/>
            <person name="Schmutz J."/>
            <person name="Larimer F."/>
            <person name="Land M."/>
            <person name="Hauser L."/>
            <person name="Kyrpides N."/>
            <person name="Mikhailova N."/>
            <person name="Shelobolina E."/>
            <person name="Aklujkar M."/>
            <person name="Lovley D."/>
            <person name="Richardson P."/>
        </authorList>
    </citation>
    <scope>NUCLEOTIDE SEQUENCE [LARGE SCALE GENOMIC DNA]</scope>
    <source>
        <strain>ATCC BAA-1134 / JCM 13001 / Rf4</strain>
    </source>
</reference>
<dbReference type="EC" id="2.9.1.1" evidence="1"/>
<dbReference type="EMBL" id="CP000698">
    <property type="protein sequence ID" value="ABQ28305.1"/>
    <property type="molecule type" value="Genomic_DNA"/>
</dbReference>
<dbReference type="RefSeq" id="WP_011940936.1">
    <property type="nucleotide sequence ID" value="NC_009483.1"/>
</dbReference>
<dbReference type="SMR" id="A5G937"/>
<dbReference type="STRING" id="351605.Gura_4162"/>
<dbReference type="KEGG" id="gur:Gura_4162"/>
<dbReference type="HOGENOM" id="CLU_038142_1_0_7"/>
<dbReference type="OrthoDB" id="9787096at2"/>
<dbReference type="UniPathway" id="UPA00906">
    <property type="reaction ID" value="UER00896"/>
</dbReference>
<dbReference type="Proteomes" id="UP000006695">
    <property type="component" value="Chromosome"/>
</dbReference>
<dbReference type="GO" id="GO:0005737">
    <property type="term" value="C:cytoplasm"/>
    <property type="evidence" value="ECO:0007669"/>
    <property type="project" value="UniProtKB-SubCell"/>
</dbReference>
<dbReference type="GO" id="GO:0004125">
    <property type="term" value="F:L-seryl-tRNA(Sec) selenium transferase activity"/>
    <property type="evidence" value="ECO:0007669"/>
    <property type="project" value="UniProtKB-UniRule"/>
</dbReference>
<dbReference type="GO" id="GO:0001717">
    <property type="term" value="P:conversion of seryl-tRNAsec to selenocys-tRNAsec"/>
    <property type="evidence" value="ECO:0007669"/>
    <property type="project" value="UniProtKB-UniRule"/>
</dbReference>
<dbReference type="GO" id="GO:0001514">
    <property type="term" value="P:selenocysteine incorporation"/>
    <property type="evidence" value="ECO:0007669"/>
    <property type="project" value="UniProtKB-UniRule"/>
</dbReference>
<dbReference type="Gene3D" id="3.90.1150.180">
    <property type="match status" value="1"/>
</dbReference>
<dbReference type="Gene3D" id="3.40.640.10">
    <property type="entry name" value="Type I PLP-dependent aspartate aminotransferase-like (Major domain)"/>
    <property type="match status" value="1"/>
</dbReference>
<dbReference type="HAMAP" id="MF_00423">
    <property type="entry name" value="SelA"/>
    <property type="match status" value="1"/>
</dbReference>
<dbReference type="InterPro" id="IPR015424">
    <property type="entry name" value="PyrdxlP-dep_Trfase"/>
</dbReference>
<dbReference type="InterPro" id="IPR015421">
    <property type="entry name" value="PyrdxlP-dep_Trfase_major"/>
</dbReference>
<dbReference type="InterPro" id="IPR018319">
    <property type="entry name" value="SelA-like"/>
</dbReference>
<dbReference type="InterPro" id="IPR004534">
    <property type="entry name" value="SelA_trans"/>
</dbReference>
<dbReference type="InterPro" id="IPR025862">
    <property type="entry name" value="SelA_trans_N_dom"/>
</dbReference>
<dbReference type="NCBIfam" id="TIGR00474">
    <property type="entry name" value="selA"/>
    <property type="match status" value="1"/>
</dbReference>
<dbReference type="PANTHER" id="PTHR32328">
    <property type="entry name" value="L-SERYL-TRNA(SEC) SELENIUM TRANSFERASE"/>
    <property type="match status" value="1"/>
</dbReference>
<dbReference type="PANTHER" id="PTHR32328:SF0">
    <property type="entry name" value="L-SERYL-TRNA(SEC) SELENIUM TRANSFERASE"/>
    <property type="match status" value="1"/>
</dbReference>
<dbReference type="Pfam" id="PF12390">
    <property type="entry name" value="Se-cys_synth_N"/>
    <property type="match status" value="1"/>
</dbReference>
<dbReference type="Pfam" id="PF03841">
    <property type="entry name" value="SelA"/>
    <property type="match status" value="1"/>
</dbReference>
<dbReference type="SUPFAM" id="SSF53383">
    <property type="entry name" value="PLP-dependent transferases"/>
    <property type="match status" value="1"/>
</dbReference>
<gene>
    <name evidence="1" type="primary">selA</name>
    <name type="ordered locus">Gura_4162</name>
</gene>